<evidence type="ECO:0000255" key="1">
    <source>
        <dbReference type="HAMAP-Rule" id="MF_01527"/>
    </source>
</evidence>
<proteinExistence type="inferred from homology"/>
<accession>Q882P7</accession>
<protein>
    <recommendedName>
        <fullName evidence="1">GTP cyclohydrolase FolE2</fullName>
        <ecNumber evidence="1">3.5.4.16</ecNumber>
    </recommendedName>
</protein>
<dbReference type="EC" id="3.5.4.16" evidence="1"/>
<dbReference type="EMBL" id="AE016853">
    <property type="protein sequence ID" value="AAO56083.1"/>
    <property type="molecule type" value="Genomic_DNA"/>
</dbReference>
<dbReference type="RefSeq" id="NP_792388.1">
    <property type="nucleotide sequence ID" value="NC_004578.1"/>
</dbReference>
<dbReference type="RefSeq" id="WP_011104093.1">
    <property type="nucleotide sequence ID" value="NC_004578.1"/>
</dbReference>
<dbReference type="SMR" id="Q882P7"/>
<dbReference type="STRING" id="223283.PSPTO_2578"/>
<dbReference type="GeneID" id="1184230"/>
<dbReference type="KEGG" id="pst:PSPTO_2578"/>
<dbReference type="PATRIC" id="fig|223283.9.peg.2619"/>
<dbReference type="eggNOG" id="COG1469">
    <property type="taxonomic scope" value="Bacteria"/>
</dbReference>
<dbReference type="HOGENOM" id="CLU_062816_0_0_6"/>
<dbReference type="OrthoDB" id="239637at2"/>
<dbReference type="PhylomeDB" id="Q882P7"/>
<dbReference type="UniPathway" id="UPA00848">
    <property type="reaction ID" value="UER00151"/>
</dbReference>
<dbReference type="Proteomes" id="UP000002515">
    <property type="component" value="Chromosome"/>
</dbReference>
<dbReference type="GO" id="GO:0003934">
    <property type="term" value="F:GTP cyclohydrolase I activity"/>
    <property type="evidence" value="ECO:0007669"/>
    <property type="project" value="UniProtKB-UniRule"/>
</dbReference>
<dbReference type="GO" id="GO:0046654">
    <property type="term" value="P:tetrahydrofolate biosynthetic process"/>
    <property type="evidence" value="ECO:0007669"/>
    <property type="project" value="UniProtKB-UniRule"/>
</dbReference>
<dbReference type="Gene3D" id="3.10.270.10">
    <property type="entry name" value="Urate Oxidase"/>
    <property type="match status" value="1"/>
</dbReference>
<dbReference type="HAMAP" id="MF_01527_B">
    <property type="entry name" value="GTP_cyclohydrol_B"/>
    <property type="match status" value="1"/>
</dbReference>
<dbReference type="InterPro" id="IPR022838">
    <property type="entry name" value="GTP_cyclohydrolase_FolE2"/>
</dbReference>
<dbReference type="InterPro" id="IPR003801">
    <property type="entry name" value="GTP_cyclohydrolase_FolE2/MptA"/>
</dbReference>
<dbReference type="NCBIfam" id="NF010200">
    <property type="entry name" value="PRK13674.1-1"/>
    <property type="match status" value="1"/>
</dbReference>
<dbReference type="PANTHER" id="PTHR36445">
    <property type="entry name" value="GTP CYCLOHYDROLASE MPTA"/>
    <property type="match status" value="1"/>
</dbReference>
<dbReference type="PANTHER" id="PTHR36445:SF1">
    <property type="entry name" value="GTP CYCLOHYDROLASE MPTA"/>
    <property type="match status" value="1"/>
</dbReference>
<dbReference type="Pfam" id="PF02649">
    <property type="entry name" value="GCHY-1"/>
    <property type="match status" value="1"/>
</dbReference>
<sequence length="301" mass="32803">MNSPLPDVALTEVSSALIALDWVGMQGVEVPLTLGEQGATHPVHAYADLQVDLTDPSVKGIHMSRLYRLLDGFAEHQVLTPETLSALLEAMVESHVDCHSSGARITLTFNLLCRRPALVTEGLSGWKSYPVKLEAVWRAGRLCLDVSADITYSSTCPCSAALSRQLLEEAFVARFGRQSFVDPMQVAAWLRENASYATPHSQRSVATVQVRVAEQATEMGLMALIDTVEQALGTPVQTAVKRADEQAFARLNGQNLMYVEDAARKIQQALEGRYPASSVSVRHFESLHPHDAAAQTSSYLS</sequence>
<comment type="function">
    <text evidence="1">Converts GTP to 7,8-dihydroneopterin triphosphate.</text>
</comment>
<comment type="catalytic activity">
    <reaction evidence="1">
        <text>GTP + H2O = 7,8-dihydroneopterin 3'-triphosphate + formate + H(+)</text>
        <dbReference type="Rhea" id="RHEA:17473"/>
        <dbReference type="ChEBI" id="CHEBI:15377"/>
        <dbReference type="ChEBI" id="CHEBI:15378"/>
        <dbReference type="ChEBI" id="CHEBI:15740"/>
        <dbReference type="ChEBI" id="CHEBI:37565"/>
        <dbReference type="ChEBI" id="CHEBI:58462"/>
        <dbReference type="EC" id="3.5.4.16"/>
    </reaction>
</comment>
<comment type="pathway">
    <text evidence="1">Cofactor biosynthesis; 7,8-dihydroneopterin triphosphate biosynthesis; 7,8-dihydroneopterin triphosphate from GTP: step 1/1.</text>
</comment>
<comment type="similarity">
    <text evidence="1">Belongs to the GTP cyclohydrolase IV family.</text>
</comment>
<feature type="chain" id="PRO_0000147721" description="GTP cyclohydrolase FolE2">
    <location>
        <begin position="1"/>
        <end position="301"/>
    </location>
</feature>
<feature type="site" description="May be catalytically important" evidence="1">
    <location>
        <position position="156"/>
    </location>
</feature>
<organism>
    <name type="scientific">Pseudomonas syringae pv. tomato (strain ATCC BAA-871 / DC3000)</name>
    <dbReference type="NCBI Taxonomy" id="223283"/>
    <lineage>
        <taxon>Bacteria</taxon>
        <taxon>Pseudomonadati</taxon>
        <taxon>Pseudomonadota</taxon>
        <taxon>Gammaproteobacteria</taxon>
        <taxon>Pseudomonadales</taxon>
        <taxon>Pseudomonadaceae</taxon>
        <taxon>Pseudomonas</taxon>
    </lineage>
</organism>
<name>GCH4_PSESM</name>
<reference key="1">
    <citation type="journal article" date="2003" name="Proc. Natl. Acad. Sci. U.S.A.">
        <title>The complete genome sequence of the Arabidopsis and tomato pathogen Pseudomonas syringae pv. tomato DC3000.</title>
        <authorList>
            <person name="Buell C.R."/>
            <person name="Joardar V."/>
            <person name="Lindeberg M."/>
            <person name="Selengut J."/>
            <person name="Paulsen I.T."/>
            <person name="Gwinn M.L."/>
            <person name="Dodson R.J."/>
            <person name="DeBoy R.T."/>
            <person name="Durkin A.S."/>
            <person name="Kolonay J.F."/>
            <person name="Madupu R."/>
            <person name="Daugherty S.C."/>
            <person name="Brinkac L.M."/>
            <person name="Beanan M.J."/>
            <person name="Haft D.H."/>
            <person name="Nelson W.C."/>
            <person name="Davidsen T.M."/>
            <person name="Zafar N."/>
            <person name="Zhou L."/>
            <person name="Liu J."/>
            <person name="Yuan Q."/>
            <person name="Khouri H.M."/>
            <person name="Fedorova N.B."/>
            <person name="Tran B."/>
            <person name="Russell D."/>
            <person name="Berry K.J."/>
            <person name="Utterback T.R."/>
            <person name="Van Aken S.E."/>
            <person name="Feldblyum T.V."/>
            <person name="D'Ascenzo M."/>
            <person name="Deng W.-L."/>
            <person name="Ramos A.R."/>
            <person name="Alfano J.R."/>
            <person name="Cartinhour S."/>
            <person name="Chatterjee A.K."/>
            <person name="Delaney T.P."/>
            <person name="Lazarowitz S.G."/>
            <person name="Martin G.B."/>
            <person name="Schneider D.J."/>
            <person name="Tang X."/>
            <person name="Bender C.L."/>
            <person name="White O."/>
            <person name="Fraser C.M."/>
            <person name="Collmer A."/>
        </authorList>
    </citation>
    <scope>NUCLEOTIDE SEQUENCE [LARGE SCALE GENOMIC DNA]</scope>
    <source>
        <strain>ATCC BAA-871 / DC3000</strain>
    </source>
</reference>
<keyword id="KW-0378">Hydrolase</keyword>
<keyword id="KW-1185">Reference proteome</keyword>
<gene>
    <name evidence="1" type="primary">folE2</name>
    <name type="ordered locus">PSPTO_2578</name>
</gene>